<organism>
    <name type="scientific">Bacillus cytotoxicus (strain DSM 22905 / CIP 110041 / 391-98 / NVH 391-98)</name>
    <dbReference type="NCBI Taxonomy" id="315749"/>
    <lineage>
        <taxon>Bacteria</taxon>
        <taxon>Bacillati</taxon>
        <taxon>Bacillota</taxon>
        <taxon>Bacilli</taxon>
        <taxon>Bacillales</taxon>
        <taxon>Bacillaceae</taxon>
        <taxon>Bacillus</taxon>
        <taxon>Bacillus cereus group</taxon>
    </lineage>
</organism>
<dbReference type="EC" id="3.6.1.15" evidence="1"/>
<dbReference type="EC" id="3.6.1.6" evidence="1"/>
<dbReference type="EMBL" id="CP000764">
    <property type="protein sequence ID" value="ABS20804.1"/>
    <property type="molecule type" value="Genomic_DNA"/>
</dbReference>
<dbReference type="RefSeq" id="WP_011983560.1">
    <property type="nucleotide sequence ID" value="NC_009674.1"/>
</dbReference>
<dbReference type="SMR" id="A7GKZ6"/>
<dbReference type="STRING" id="315749.Bcer98_0449"/>
<dbReference type="GeneID" id="33895793"/>
<dbReference type="KEGG" id="bcy:Bcer98_0449"/>
<dbReference type="eggNOG" id="COG3557">
    <property type="taxonomic scope" value="Bacteria"/>
</dbReference>
<dbReference type="HOGENOM" id="CLU_109787_1_0_9"/>
<dbReference type="OrthoDB" id="1645325at2"/>
<dbReference type="Proteomes" id="UP000002300">
    <property type="component" value="Chromosome"/>
</dbReference>
<dbReference type="GO" id="GO:0000287">
    <property type="term" value="F:magnesium ion binding"/>
    <property type="evidence" value="ECO:0007669"/>
    <property type="project" value="UniProtKB-UniRule"/>
</dbReference>
<dbReference type="GO" id="GO:0017110">
    <property type="term" value="F:nucleoside diphosphate phosphatase activity"/>
    <property type="evidence" value="ECO:0007669"/>
    <property type="project" value="UniProtKB-UniRule"/>
</dbReference>
<dbReference type="GO" id="GO:0017111">
    <property type="term" value="F:ribonucleoside triphosphate phosphatase activity"/>
    <property type="evidence" value="ECO:0007669"/>
    <property type="project" value="UniProtKB-UniRule"/>
</dbReference>
<dbReference type="Gene3D" id="2.40.380.10">
    <property type="entry name" value="FomD-like"/>
    <property type="match status" value="1"/>
</dbReference>
<dbReference type="HAMAP" id="MF_01568">
    <property type="entry name" value="Ntdp"/>
    <property type="match status" value="1"/>
</dbReference>
<dbReference type="InterPro" id="IPR007295">
    <property type="entry name" value="DUF402"/>
</dbReference>
<dbReference type="InterPro" id="IPR035930">
    <property type="entry name" value="FomD-like_sf"/>
</dbReference>
<dbReference type="InterPro" id="IPR050212">
    <property type="entry name" value="Ntdp-like"/>
</dbReference>
<dbReference type="InterPro" id="IPR016882">
    <property type="entry name" value="SA1684"/>
</dbReference>
<dbReference type="NCBIfam" id="NF010183">
    <property type="entry name" value="PRK13662.1"/>
    <property type="match status" value="1"/>
</dbReference>
<dbReference type="PANTHER" id="PTHR39159">
    <property type="match status" value="1"/>
</dbReference>
<dbReference type="PANTHER" id="PTHR39159:SF1">
    <property type="entry name" value="UPF0374 PROTEIN YGAC"/>
    <property type="match status" value="1"/>
</dbReference>
<dbReference type="Pfam" id="PF04167">
    <property type="entry name" value="DUF402"/>
    <property type="match status" value="1"/>
</dbReference>
<dbReference type="PIRSF" id="PIRSF028345">
    <property type="entry name" value="UCP028345"/>
    <property type="match status" value="1"/>
</dbReference>
<dbReference type="SUPFAM" id="SSF159234">
    <property type="entry name" value="FomD-like"/>
    <property type="match status" value="1"/>
</dbReference>
<name>NTDP_BACCN</name>
<accession>A7GKZ6</accession>
<sequence length="176" mass="21202">MGFPKEGEKVQIHSYKHNGSIHRMWEETTILKGTQSLVIGANDRTLVTESDGRTWITREPAICYFHANYWFNVIGMLREDGVYYYCNLSSPFAYDLEALKYIDYDLDIKVYPDMTYTLLDEDEYEKHSKMMKYPPVIDTILKRNVEYLRKWIHQRKGPFAPDFVDMWYERYLMYRD</sequence>
<gene>
    <name type="ordered locus">Bcer98_0449</name>
</gene>
<keyword id="KW-0378">Hydrolase</keyword>
<keyword id="KW-0460">Magnesium</keyword>
<keyword id="KW-0479">Metal-binding</keyword>
<protein>
    <recommendedName>
        <fullName evidence="1">Nucleoside triphosphate/diphosphate phosphatase</fullName>
        <ecNumber evidence="1">3.6.1.15</ecNumber>
        <ecNumber evidence="1">3.6.1.6</ecNumber>
    </recommendedName>
</protein>
<feature type="chain" id="PRO_1000087827" description="Nucleoside triphosphate/diphosphate phosphatase">
    <location>
        <begin position="1"/>
        <end position="176"/>
    </location>
</feature>
<feature type="active site" description="Proton donor" evidence="1">
    <location>
        <position position="23"/>
    </location>
</feature>
<feature type="binding site" evidence="1">
    <location>
        <position position="87"/>
    </location>
    <ligand>
        <name>Mg(2+)</name>
        <dbReference type="ChEBI" id="CHEBI:18420"/>
        <label>1</label>
    </ligand>
</feature>
<feature type="binding site" evidence="1">
    <location>
        <position position="103"/>
    </location>
    <ligand>
        <name>Mg(2+)</name>
        <dbReference type="ChEBI" id="CHEBI:18420"/>
        <label>1</label>
    </ligand>
</feature>
<feature type="binding site" evidence="1">
    <location>
        <position position="105"/>
    </location>
    <ligand>
        <name>Mg(2+)</name>
        <dbReference type="ChEBI" id="CHEBI:18420"/>
        <label>2</label>
    </ligand>
</feature>
<feature type="binding site" evidence="1">
    <location>
        <position position="107"/>
    </location>
    <ligand>
        <name>Mg(2+)</name>
        <dbReference type="ChEBI" id="CHEBI:18420"/>
        <label>1</label>
    </ligand>
</feature>
<feature type="binding site" evidence="1">
    <location>
        <position position="107"/>
    </location>
    <ligand>
        <name>Mg(2+)</name>
        <dbReference type="ChEBI" id="CHEBI:18420"/>
        <label>2</label>
    </ligand>
</feature>
<feature type="binding site" evidence="1">
    <location>
        <position position="120"/>
    </location>
    <ligand>
        <name>Mg(2+)</name>
        <dbReference type="ChEBI" id="CHEBI:18420"/>
        <label>2</label>
    </ligand>
</feature>
<feature type="binding site" evidence="1">
    <location>
        <position position="123"/>
    </location>
    <ligand>
        <name>Mg(2+)</name>
        <dbReference type="ChEBI" id="CHEBI:18420"/>
        <label>2</label>
    </ligand>
</feature>
<evidence type="ECO:0000255" key="1">
    <source>
        <dbReference type="HAMAP-Rule" id="MF_01568"/>
    </source>
</evidence>
<proteinExistence type="inferred from homology"/>
<reference key="1">
    <citation type="journal article" date="2008" name="Chem. Biol. Interact.">
        <title>Extending the Bacillus cereus group genomics to putative food-borne pathogens of different toxicity.</title>
        <authorList>
            <person name="Lapidus A."/>
            <person name="Goltsman E."/>
            <person name="Auger S."/>
            <person name="Galleron N."/>
            <person name="Segurens B."/>
            <person name="Dossat C."/>
            <person name="Land M.L."/>
            <person name="Broussolle V."/>
            <person name="Brillard J."/>
            <person name="Guinebretiere M.-H."/>
            <person name="Sanchis V."/>
            <person name="Nguen-the C."/>
            <person name="Lereclus D."/>
            <person name="Richardson P."/>
            <person name="Wincker P."/>
            <person name="Weissenbach J."/>
            <person name="Ehrlich S.D."/>
            <person name="Sorokin A."/>
        </authorList>
    </citation>
    <scope>NUCLEOTIDE SEQUENCE [LARGE SCALE GENOMIC DNA]</scope>
    <source>
        <strain>DSM 22905 / CIP 110041 / 391-98 / NVH 391-98</strain>
    </source>
</reference>
<comment type="function">
    <text evidence="1">Has nucleoside phosphatase activity towards nucleoside triphosphates and nucleoside diphosphates.</text>
</comment>
<comment type="catalytic activity">
    <reaction evidence="1">
        <text>a ribonucleoside 5'-triphosphate + H2O = a ribonucleoside 5'-diphosphate + phosphate + H(+)</text>
        <dbReference type="Rhea" id="RHEA:23680"/>
        <dbReference type="ChEBI" id="CHEBI:15377"/>
        <dbReference type="ChEBI" id="CHEBI:15378"/>
        <dbReference type="ChEBI" id="CHEBI:43474"/>
        <dbReference type="ChEBI" id="CHEBI:57930"/>
        <dbReference type="ChEBI" id="CHEBI:61557"/>
        <dbReference type="EC" id="3.6.1.15"/>
    </reaction>
</comment>
<comment type="catalytic activity">
    <reaction evidence="1">
        <text>a ribonucleoside 5'-diphosphate + H2O = a ribonucleoside 5'-phosphate + phosphate + H(+)</text>
        <dbReference type="Rhea" id="RHEA:36799"/>
        <dbReference type="ChEBI" id="CHEBI:15377"/>
        <dbReference type="ChEBI" id="CHEBI:15378"/>
        <dbReference type="ChEBI" id="CHEBI:43474"/>
        <dbReference type="ChEBI" id="CHEBI:57930"/>
        <dbReference type="ChEBI" id="CHEBI:58043"/>
        <dbReference type="EC" id="3.6.1.6"/>
    </reaction>
</comment>
<comment type="cofactor">
    <cofactor evidence="1">
        <name>Mg(2+)</name>
        <dbReference type="ChEBI" id="CHEBI:18420"/>
    </cofactor>
</comment>
<comment type="similarity">
    <text evidence="1">Belongs to the Ntdp family.</text>
</comment>